<gene>
    <name evidence="5" type="primary">CYP81Q32</name>
</gene>
<organism>
    <name type="scientific">Catharanthus roseus</name>
    <name type="common">Madagascar periwinkle</name>
    <name type="synonym">Vinca rosea</name>
    <dbReference type="NCBI Taxonomy" id="4058"/>
    <lineage>
        <taxon>Eukaryota</taxon>
        <taxon>Viridiplantae</taxon>
        <taxon>Streptophyta</taxon>
        <taxon>Embryophyta</taxon>
        <taxon>Tracheophyta</taxon>
        <taxon>Spermatophyta</taxon>
        <taxon>Magnoliopsida</taxon>
        <taxon>eudicotyledons</taxon>
        <taxon>Gunneridae</taxon>
        <taxon>Pentapetalae</taxon>
        <taxon>asterids</taxon>
        <taxon>lamiids</taxon>
        <taxon>Gentianales</taxon>
        <taxon>Apocynaceae</taxon>
        <taxon>Rauvolfioideae</taxon>
        <taxon>Vinceae</taxon>
        <taxon>Catharanthinae</taxon>
        <taxon>Catharanthus</taxon>
    </lineage>
</organism>
<reference key="1">
    <citation type="journal article" date="2014" name="Nat. Commun.">
        <title>The seco-iridoid pathway from Catharanthus roseus.</title>
        <authorList>
            <person name="Miettinen K."/>
            <person name="Dong L."/>
            <person name="Navrot N."/>
            <person name="Schneider T."/>
            <person name="Burlat V."/>
            <person name="Pollier J."/>
            <person name="Woittiez L."/>
            <person name="van der Krol S."/>
            <person name="Lugan R."/>
            <person name="Ilc T."/>
            <person name="Verpoorte R."/>
            <person name="Oksman-Caldentey K.M."/>
            <person name="Martinoia E."/>
            <person name="Bouwmeester H."/>
            <person name="Goossens A."/>
            <person name="Memelink J."/>
            <person name="Werck-Reichhart D."/>
        </authorList>
    </citation>
    <scope>NUCLEOTIDE SEQUENCE [MRNA]</scope>
    <scope>TISSUE SPECIFICITY</scope>
    <source>
        <strain>cv. Little Bright Eyes</strain>
    </source>
</reference>
<evidence type="ECO:0000250" key="1">
    <source>
        <dbReference type="UniProtKB" id="P04798"/>
    </source>
</evidence>
<evidence type="ECO:0000255" key="2"/>
<evidence type="ECO:0000255" key="3">
    <source>
        <dbReference type="PROSITE-ProRule" id="PRU00498"/>
    </source>
</evidence>
<evidence type="ECO:0000269" key="4">
    <source>
    </source>
</evidence>
<evidence type="ECO:0000303" key="5">
    <source>
    </source>
</evidence>
<evidence type="ECO:0000305" key="6"/>
<name>CYQ32_CATRO</name>
<dbReference type="EC" id="1.14.-.-" evidence="6"/>
<dbReference type="EMBL" id="KF302070">
    <property type="protein sequence ID" value="AHK60837.1"/>
    <property type="molecule type" value="mRNA"/>
</dbReference>
<dbReference type="SMR" id="W8JMU7"/>
<dbReference type="GlyCosmos" id="W8JMU7">
    <property type="glycosylation" value="3 sites, No reported glycans"/>
</dbReference>
<dbReference type="OrthoDB" id="1055148at2759"/>
<dbReference type="GO" id="GO:0016020">
    <property type="term" value="C:membrane"/>
    <property type="evidence" value="ECO:0007669"/>
    <property type="project" value="UniProtKB-SubCell"/>
</dbReference>
<dbReference type="GO" id="GO:0020037">
    <property type="term" value="F:heme binding"/>
    <property type="evidence" value="ECO:0007669"/>
    <property type="project" value="InterPro"/>
</dbReference>
<dbReference type="GO" id="GO:0005506">
    <property type="term" value="F:iron ion binding"/>
    <property type="evidence" value="ECO:0007669"/>
    <property type="project" value="InterPro"/>
</dbReference>
<dbReference type="GO" id="GO:0004497">
    <property type="term" value="F:monooxygenase activity"/>
    <property type="evidence" value="ECO:0007669"/>
    <property type="project" value="UniProtKB-KW"/>
</dbReference>
<dbReference type="GO" id="GO:0016705">
    <property type="term" value="F:oxidoreductase activity, acting on paired donors, with incorporation or reduction of molecular oxygen"/>
    <property type="evidence" value="ECO:0007669"/>
    <property type="project" value="InterPro"/>
</dbReference>
<dbReference type="CDD" id="cd20653">
    <property type="entry name" value="CYP81"/>
    <property type="match status" value="1"/>
</dbReference>
<dbReference type="FunFam" id="1.10.630.10:FF:000023">
    <property type="entry name" value="Cytochrome P450 family protein"/>
    <property type="match status" value="1"/>
</dbReference>
<dbReference type="Gene3D" id="1.10.630.10">
    <property type="entry name" value="Cytochrome P450"/>
    <property type="match status" value="1"/>
</dbReference>
<dbReference type="InterPro" id="IPR001128">
    <property type="entry name" value="Cyt_P450"/>
</dbReference>
<dbReference type="InterPro" id="IPR017972">
    <property type="entry name" value="Cyt_P450_CS"/>
</dbReference>
<dbReference type="InterPro" id="IPR002401">
    <property type="entry name" value="Cyt_P450_E_grp-I"/>
</dbReference>
<dbReference type="InterPro" id="IPR036396">
    <property type="entry name" value="Cyt_P450_sf"/>
</dbReference>
<dbReference type="InterPro" id="IPR050651">
    <property type="entry name" value="Plant_Cytochrome_P450_Monoox"/>
</dbReference>
<dbReference type="PANTHER" id="PTHR47947">
    <property type="entry name" value="CYTOCHROME P450 82C3-RELATED"/>
    <property type="match status" value="1"/>
</dbReference>
<dbReference type="PANTHER" id="PTHR47947:SF62">
    <property type="entry name" value="CYTOCHROME P450, FAMILY 81, SUBFAMILY D, POLYPEPTIDE 5"/>
    <property type="match status" value="1"/>
</dbReference>
<dbReference type="Pfam" id="PF00067">
    <property type="entry name" value="p450"/>
    <property type="match status" value="1"/>
</dbReference>
<dbReference type="PRINTS" id="PR00463">
    <property type="entry name" value="EP450I"/>
</dbReference>
<dbReference type="PRINTS" id="PR00385">
    <property type="entry name" value="P450"/>
</dbReference>
<dbReference type="SUPFAM" id="SSF48264">
    <property type="entry name" value="Cytochrome P450"/>
    <property type="match status" value="1"/>
</dbReference>
<dbReference type="PROSITE" id="PS00086">
    <property type="entry name" value="CYTOCHROME_P450"/>
    <property type="match status" value="1"/>
</dbReference>
<keyword id="KW-0325">Glycoprotein</keyword>
<keyword id="KW-0349">Heme</keyword>
<keyword id="KW-0408">Iron</keyword>
<keyword id="KW-0472">Membrane</keyword>
<keyword id="KW-0479">Metal-binding</keyword>
<keyword id="KW-0503">Monooxygenase</keyword>
<keyword id="KW-0560">Oxidoreductase</keyword>
<keyword id="KW-0812">Transmembrane</keyword>
<keyword id="KW-1133">Transmembrane helix</keyword>
<feature type="chain" id="PRO_0000446416" description="Cytochrome P450 81Q32">
    <location>
        <begin position="1"/>
        <end position="499"/>
    </location>
</feature>
<feature type="transmembrane region" description="Helical" evidence="2">
    <location>
        <begin position="5"/>
        <end position="25"/>
    </location>
</feature>
<feature type="binding site" description="axial binding residue" evidence="1">
    <location>
        <position position="434"/>
    </location>
    <ligand>
        <name>heme</name>
        <dbReference type="ChEBI" id="CHEBI:30413"/>
    </ligand>
    <ligandPart>
        <name>Fe</name>
        <dbReference type="ChEBI" id="CHEBI:18248"/>
    </ligandPart>
</feature>
<feature type="glycosylation site" description="N-linked (GlcNAc...) asparagine" evidence="3">
    <location>
        <position position="112"/>
    </location>
</feature>
<feature type="glycosylation site" description="N-linked (GlcNAc...) asparagine" evidence="3">
    <location>
        <position position="183"/>
    </location>
</feature>
<feature type="glycosylation site" description="N-linked (GlcNAc...) asparagine" evidence="3">
    <location>
        <position position="266"/>
    </location>
</feature>
<protein>
    <recommendedName>
        <fullName evidence="5">Cytochrome P450 81Q32</fullName>
        <shortName evidence="5">CrCYP81Q32</shortName>
        <ecNumber evidence="6">1.14.-.-</ecNumber>
    </recommendedName>
</protein>
<accession>W8JMU7</accession>
<proteinExistence type="evidence at transcript level"/>
<comment type="subcellular location">
    <subcellularLocation>
        <location evidence="2">Membrane</location>
        <topology evidence="2">Single-pass membrane protein</topology>
    </subcellularLocation>
</comment>
<comment type="tissue specificity">
    <text evidence="4">Expressed in leaf epidermis and in the leaf internal phloem-associated parenchyma (IPAP) inside the mesophyll.</text>
</comment>
<comment type="similarity">
    <text evidence="6">Belongs to the cytochrome P450 family.</text>
</comment>
<sequence length="499" mass="56111">MESSTLLYTFLAVVLLSISLKLFPVSRRRRNLPPSPGLALPVIGHLHLIGKLLHRSLYDLSKKYGSVFSLQLGNRLVLVVSSPAAAEECFTKNDIVFANRPLFILGKYIGYNYTTMVGSPYGEHWRNLRRLAAVEIFSAGSLNRFLSIREDEVKQLLLSLYQSSGQDFGKVEMKSKLSELSFNVTMRMVAGKRYFGQDVDSDEAKLFRALIGEVFEHAGASNPGDFVPFLRWIDFKNYEKKVSKISQEMDAFLQRLIHESRINKNNVTMIDHLLSLQESQPEYYTDQIIKGIIMVLLLAGTDTSAVTVEWAMSLLLNHPETLEKARTEIETQVGSNRLIEEQDLPKLTYLHNIISETFRLCPAAPMLVPHESSDDCKVQGYDVPKGTILLVNAWAIHRDPEFWDEPTLFKPERHGGVELEPSKLMPFGMGRRSCPGSGLAQRVVGLTLGALIQCFEWKRIGEAKIDMAEGSGLTMPKAQPLEALCKPRNILHKVVSETS</sequence>